<dbReference type="EC" id="2.3.1.47"/>
<dbReference type="EMBL" id="CP000518">
    <property type="protein sequence ID" value="ABL92331.1"/>
    <property type="molecule type" value="Genomic_DNA"/>
</dbReference>
<dbReference type="SMR" id="A1UHM3"/>
<dbReference type="STRING" id="189918.Mkms_3137"/>
<dbReference type="KEGG" id="mkm:Mkms_3137"/>
<dbReference type="HOGENOM" id="CLU_015846_11_2_11"/>
<dbReference type="OrthoDB" id="9807157at2"/>
<dbReference type="UniPathway" id="UPA00078"/>
<dbReference type="GO" id="GO:0008710">
    <property type="term" value="F:8-amino-7-oxononanoate synthase activity"/>
    <property type="evidence" value="ECO:0007669"/>
    <property type="project" value="UniProtKB-EC"/>
</dbReference>
<dbReference type="GO" id="GO:0030170">
    <property type="term" value="F:pyridoxal phosphate binding"/>
    <property type="evidence" value="ECO:0007669"/>
    <property type="project" value="InterPro"/>
</dbReference>
<dbReference type="GO" id="GO:0009102">
    <property type="term" value="P:biotin biosynthetic process"/>
    <property type="evidence" value="ECO:0007669"/>
    <property type="project" value="UniProtKB-UniPathway"/>
</dbReference>
<dbReference type="Gene3D" id="3.90.1150.10">
    <property type="entry name" value="Aspartate Aminotransferase, domain 1"/>
    <property type="match status" value="1"/>
</dbReference>
<dbReference type="Gene3D" id="3.40.640.10">
    <property type="entry name" value="Type I PLP-dependent aspartate aminotransferase-like (Major domain)"/>
    <property type="match status" value="1"/>
</dbReference>
<dbReference type="InterPro" id="IPR001917">
    <property type="entry name" value="Aminotrans_II_pyridoxalP_BS"/>
</dbReference>
<dbReference type="InterPro" id="IPR004839">
    <property type="entry name" value="Aminotransferase_I/II_large"/>
</dbReference>
<dbReference type="InterPro" id="IPR050087">
    <property type="entry name" value="AON_synthase_class-II"/>
</dbReference>
<dbReference type="InterPro" id="IPR015424">
    <property type="entry name" value="PyrdxlP-dep_Trfase"/>
</dbReference>
<dbReference type="InterPro" id="IPR015421">
    <property type="entry name" value="PyrdxlP-dep_Trfase_major"/>
</dbReference>
<dbReference type="InterPro" id="IPR015422">
    <property type="entry name" value="PyrdxlP-dep_Trfase_small"/>
</dbReference>
<dbReference type="PANTHER" id="PTHR13693:SF100">
    <property type="entry name" value="8-AMINO-7-OXONONANOATE SYNTHASE"/>
    <property type="match status" value="1"/>
</dbReference>
<dbReference type="PANTHER" id="PTHR13693">
    <property type="entry name" value="CLASS II AMINOTRANSFERASE/8-AMINO-7-OXONONANOATE SYNTHASE"/>
    <property type="match status" value="1"/>
</dbReference>
<dbReference type="Pfam" id="PF00155">
    <property type="entry name" value="Aminotran_1_2"/>
    <property type="match status" value="1"/>
</dbReference>
<dbReference type="SUPFAM" id="SSF53383">
    <property type="entry name" value="PLP-dependent transferases"/>
    <property type="match status" value="1"/>
</dbReference>
<dbReference type="PROSITE" id="PS00599">
    <property type="entry name" value="AA_TRANSFER_CLASS_2"/>
    <property type="match status" value="1"/>
</dbReference>
<name>BIOF_MYCSK</name>
<keyword id="KW-0012">Acyltransferase</keyword>
<keyword id="KW-0093">Biotin biosynthesis</keyword>
<keyword id="KW-0663">Pyridoxal phosphate</keyword>
<keyword id="KW-0808">Transferase</keyword>
<feature type="chain" id="PRO_0000381041" description="8-amino-7-oxononanoate synthase">
    <location>
        <begin position="1"/>
        <end position="382"/>
    </location>
</feature>
<feature type="binding site" evidence="1">
    <location>
        <position position="26"/>
    </location>
    <ligand>
        <name>substrate</name>
    </ligand>
</feature>
<feature type="binding site" evidence="1">
    <location>
        <begin position="104"/>
        <end position="105"/>
    </location>
    <ligand>
        <name>pyridoxal 5'-phosphate</name>
        <dbReference type="ChEBI" id="CHEBI:597326"/>
    </ligand>
</feature>
<feature type="binding site" evidence="1">
    <location>
        <position position="129"/>
    </location>
    <ligand>
        <name>substrate</name>
    </ligand>
</feature>
<feature type="binding site" evidence="1">
    <location>
        <position position="175"/>
    </location>
    <ligand>
        <name>pyridoxal 5'-phosphate</name>
        <dbReference type="ChEBI" id="CHEBI:597326"/>
    </ligand>
</feature>
<feature type="binding site" evidence="1">
    <location>
        <begin position="200"/>
        <end position="203"/>
    </location>
    <ligand>
        <name>pyridoxal 5'-phosphate</name>
        <dbReference type="ChEBI" id="CHEBI:597326"/>
    </ligand>
</feature>
<feature type="binding site" evidence="1">
    <location>
        <begin position="232"/>
        <end position="235"/>
    </location>
    <ligand>
        <name>pyridoxal 5'-phosphate</name>
        <dbReference type="ChEBI" id="CHEBI:597326"/>
    </ligand>
</feature>
<feature type="binding site" evidence="1">
    <location>
        <position position="345"/>
    </location>
    <ligand>
        <name>substrate</name>
    </ligand>
</feature>
<feature type="modified residue" description="N6-(pyridoxal phosphate)lysine" evidence="1">
    <location>
        <position position="235"/>
    </location>
</feature>
<accession>A1UHM3</accession>
<protein>
    <recommendedName>
        <fullName>8-amino-7-oxononanoate synthase</fullName>
        <shortName>AONS</shortName>
        <ecNumber>2.3.1.47</ecNumber>
    </recommendedName>
    <alternativeName>
        <fullName>7-keto-8-amino-pelargonic acid synthase</fullName>
        <shortName>7-KAP synthase</shortName>
        <shortName>KAPA synthase</shortName>
    </alternativeName>
    <alternativeName>
        <fullName>8-amino-7-ketopelargonate synthase</fullName>
    </alternativeName>
    <alternativeName>
        <fullName>Alpha-oxoamine synthase</fullName>
    </alternativeName>
</protein>
<evidence type="ECO:0000250" key="1"/>
<evidence type="ECO:0000305" key="2"/>
<gene>
    <name type="ordered locus">Mkms_3137</name>
</gene>
<organism>
    <name type="scientific">Mycobacterium sp. (strain KMS)</name>
    <dbReference type="NCBI Taxonomy" id="189918"/>
    <lineage>
        <taxon>Bacteria</taxon>
        <taxon>Bacillati</taxon>
        <taxon>Actinomycetota</taxon>
        <taxon>Actinomycetes</taxon>
        <taxon>Mycobacteriales</taxon>
        <taxon>Mycobacteriaceae</taxon>
        <taxon>Mycobacterium</taxon>
    </lineage>
</organism>
<sequence length="382" mass="39445">MTRAGLSPLAWLDEVADQRRAAGLRRALRTRPAGGTAVDLASNDYLGLSTHPRVVEGAVRAVREWGAGSTGSRLVTGNTELHEGFERALAAFTGAESALVFSSGYTANLGAVVALSGPGSLLVSDALTHASLVDACRLSRARVVVTPHRDVTAIETALATRDEQRAIVVTDSVFSADGVLAPLRDMHDVCRRHGALLIVDEAHGLGVRGTGGRGLLDEVGLAGAPDVVMTTTLSKALGSQGGVVLGPLAVRDHLIDAARPFIFDTGLAPAAVGAAWAALEVLVDEPSRARAVLDNAAALAQACDVPARPDSAVVSVILGEPEVALAAAIACLEQGLRVGCFRPPTVPAGTSRLRLTARASLTDDDLDTARRVLADVLTAARR</sequence>
<reference key="1">
    <citation type="submission" date="2006-12" db="EMBL/GenBank/DDBJ databases">
        <title>Complete sequence of chromosome of Mycobacterium sp. KMS.</title>
        <authorList>
            <consortium name="US DOE Joint Genome Institute"/>
            <person name="Copeland A."/>
            <person name="Lucas S."/>
            <person name="Lapidus A."/>
            <person name="Barry K."/>
            <person name="Detter J.C."/>
            <person name="Glavina del Rio T."/>
            <person name="Hammon N."/>
            <person name="Israni S."/>
            <person name="Dalin E."/>
            <person name="Tice H."/>
            <person name="Pitluck S."/>
            <person name="Kiss H."/>
            <person name="Brettin T."/>
            <person name="Bruce D."/>
            <person name="Han C."/>
            <person name="Tapia R."/>
            <person name="Gilna P."/>
            <person name="Schmutz J."/>
            <person name="Larimer F."/>
            <person name="Land M."/>
            <person name="Hauser L."/>
            <person name="Kyrpides N."/>
            <person name="Mikhailova N."/>
            <person name="Miller C.D."/>
            <person name="Richardson P."/>
        </authorList>
    </citation>
    <scope>NUCLEOTIDE SEQUENCE [LARGE SCALE GENOMIC DNA]</scope>
    <source>
        <strain>KMS</strain>
    </source>
</reference>
<proteinExistence type="inferred from homology"/>
<comment type="function">
    <text evidence="1">Catalyzes the decarboxylative condensation of pimeloyl-[acyl-carrier protein] and L-alanine to produce 8-amino-7-oxononanoate (AON), [acyl-carrier protein], and carbon dioxide.</text>
</comment>
<comment type="catalytic activity">
    <reaction>
        <text>6-carboxyhexanoyl-[ACP] + L-alanine + H(+) = (8S)-8-amino-7-oxononanoate + holo-[ACP] + CO2</text>
        <dbReference type="Rhea" id="RHEA:42288"/>
        <dbReference type="Rhea" id="RHEA-COMP:9685"/>
        <dbReference type="Rhea" id="RHEA-COMP:9955"/>
        <dbReference type="ChEBI" id="CHEBI:15378"/>
        <dbReference type="ChEBI" id="CHEBI:16526"/>
        <dbReference type="ChEBI" id="CHEBI:57972"/>
        <dbReference type="ChEBI" id="CHEBI:64479"/>
        <dbReference type="ChEBI" id="CHEBI:78846"/>
        <dbReference type="ChEBI" id="CHEBI:149468"/>
        <dbReference type="EC" id="2.3.1.47"/>
    </reaction>
</comment>
<comment type="cofactor">
    <cofactor evidence="1">
        <name>pyridoxal 5'-phosphate</name>
        <dbReference type="ChEBI" id="CHEBI:597326"/>
    </cofactor>
</comment>
<comment type="pathway">
    <text>Cofactor biosynthesis; biotin biosynthesis.</text>
</comment>
<comment type="subunit">
    <text evidence="1">Homodimer.</text>
</comment>
<comment type="similarity">
    <text evidence="2">Belongs to the class-II pyridoxal-phosphate-dependent aminotransferase family. BioF subfamily.</text>
</comment>